<gene>
    <name evidence="1" type="primary">purA</name>
    <name type="ordered locus">Mmar10_0558</name>
</gene>
<evidence type="ECO:0000255" key="1">
    <source>
        <dbReference type="HAMAP-Rule" id="MF_00011"/>
    </source>
</evidence>
<dbReference type="EC" id="6.3.4.4" evidence="1"/>
<dbReference type="EMBL" id="CP000449">
    <property type="protein sequence ID" value="ABI64851.1"/>
    <property type="molecule type" value="Genomic_DNA"/>
</dbReference>
<dbReference type="RefSeq" id="WP_011642498.1">
    <property type="nucleotide sequence ID" value="NC_008347.1"/>
</dbReference>
<dbReference type="SMR" id="Q0AS86"/>
<dbReference type="STRING" id="394221.Mmar10_0558"/>
<dbReference type="KEGG" id="mmr:Mmar10_0558"/>
<dbReference type="eggNOG" id="COG0104">
    <property type="taxonomic scope" value="Bacteria"/>
</dbReference>
<dbReference type="HOGENOM" id="CLU_029848_0_0_5"/>
<dbReference type="OrthoDB" id="9807553at2"/>
<dbReference type="UniPathway" id="UPA00075">
    <property type="reaction ID" value="UER00335"/>
</dbReference>
<dbReference type="Proteomes" id="UP000001964">
    <property type="component" value="Chromosome"/>
</dbReference>
<dbReference type="GO" id="GO:0005737">
    <property type="term" value="C:cytoplasm"/>
    <property type="evidence" value="ECO:0007669"/>
    <property type="project" value="UniProtKB-SubCell"/>
</dbReference>
<dbReference type="GO" id="GO:0004019">
    <property type="term" value="F:adenylosuccinate synthase activity"/>
    <property type="evidence" value="ECO:0007669"/>
    <property type="project" value="UniProtKB-UniRule"/>
</dbReference>
<dbReference type="GO" id="GO:0005525">
    <property type="term" value="F:GTP binding"/>
    <property type="evidence" value="ECO:0007669"/>
    <property type="project" value="UniProtKB-UniRule"/>
</dbReference>
<dbReference type="GO" id="GO:0000287">
    <property type="term" value="F:magnesium ion binding"/>
    <property type="evidence" value="ECO:0007669"/>
    <property type="project" value="UniProtKB-UniRule"/>
</dbReference>
<dbReference type="GO" id="GO:0044208">
    <property type="term" value="P:'de novo' AMP biosynthetic process"/>
    <property type="evidence" value="ECO:0007669"/>
    <property type="project" value="UniProtKB-UniRule"/>
</dbReference>
<dbReference type="GO" id="GO:0046040">
    <property type="term" value="P:IMP metabolic process"/>
    <property type="evidence" value="ECO:0007669"/>
    <property type="project" value="TreeGrafter"/>
</dbReference>
<dbReference type="CDD" id="cd03108">
    <property type="entry name" value="AdSS"/>
    <property type="match status" value="1"/>
</dbReference>
<dbReference type="FunFam" id="1.10.300.10:FF:000001">
    <property type="entry name" value="Adenylosuccinate synthetase"/>
    <property type="match status" value="1"/>
</dbReference>
<dbReference type="FunFam" id="3.90.170.10:FF:000001">
    <property type="entry name" value="Adenylosuccinate synthetase"/>
    <property type="match status" value="1"/>
</dbReference>
<dbReference type="Gene3D" id="3.40.440.10">
    <property type="entry name" value="Adenylosuccinate Synthetase, subunit A, domain 1"/>
    <property type="match status" value="1"/>
</dbReference>
<dbReference type="Gene3D" id="1.10.300.10">
    <property type="entry name" value="Adenylosuccinate Synthetase, subunit A, domain 2"/>
    <property type="match status" value="1"/>
</dbReference>
<dbReference type="Gene3D" id="3.90.170.10">
    <property type="entry name" value="Adenylosuccinate Synthetase, subunit A, domain 3"/>
    <property type="match status" value="1"/>
</dbReference>
<dbReference type="HAMAP" id="MF_00011">
    <property type="entry name" value="Adenylosucc_synth"/>
    <property type="match status" value="1"/>
</dbReference>
<dbReference type="InterPro" id="IPR018220">
    <property type="entry name" value="Adenylosuccin_syn_GTP-bd"/>
</dbReference>
<dbReference type="InterPro" id="IPR033128">
    <property type="entry name" value="Adenylosuccin_syn_Lys_AS"/>
</dbReference>
<dbReference type="InterPro" id="IPR042109">
    <property type="entry name" value="Adenylosuccinate_synth_dom1"/>
</dbReference>
<dbReference type="InterPro" id="IPR042110">
    <property type="entry name" value="Adenylosuccinate_synth_dom2"/>
</dbReference>
<dbReference type="InterPro" id="IPR042111">
    <property type="entry name" value="Adenylosuccinate_synth_dom3"/>
</dbReference>
<dbReference type="InterPro" id="IPR001114">
    <property type="entry name" value="Adenylosuccinate_synthetase"/>
</dbReference>
<dbReference type="InterPro" id="IPR027417">
    <property type="entry name" value="P-loop_NTPase"/>
</dbReference>
<dbReference type="NCBIfam" id="NF002223">
    <property type="entry name" value="PRK01117.1"/>
    <property type="match status" value="1"/>
</dbReference>
<dbReference type="NCBIfam" id="TIGR00184">
    <property type="entry name" value="purA"/>
    <property type="match status" value="1"/>
</dbReference>
<dbReference type="PANTHER" id="PTHR11846">
    <property type="entry name" value="ADENYLOSUCCINATE SYNTHETASE"/>
    <property type="match status" value="1"/>
</dbReference>
<dbReference type="PANTHER" id="PTHR11846:SF0">
    <property type="entry name" value="ADENYLOSUCCINATE SYNTHETASE"/>
    <property type="match status" value="1"/>
</dbReference>
<dbReference type="Pfam" id="PF00709">
    <property type="entry name" value="Adenylsucc_synt"/>
    <property type="match status" value="1"/>
</dbReference>
<dbReference type="SMART" id="SM00788">
    <property type="entry name" value="Adenylsucc_synt"/>
    <property type="match status" value="1"/>
</dbReference>
<dbReference type="SUPFAM" id="SSF52540">
    <property type="entry name" value="P-loop containing nucleoside triphosphate hydrolases"/>
    <property type="match status" value="1"/>
</dbReference>
<dbReference type="PROSITE" id="PS01266">
    <property type="entry name" value="ADENYLOSUCCIN_SYN_1"/>
    <property type="match status" value="1"/>
</dbReference>
<dbReference type="PROSITE" id="PS00513">
    <property type="entry name" value="ADENYLOSUCCIN_SYN_2"/>
    <property type="match status" value="1"/>
</dbReference>
<comment type="function">
    <text evidence="1">Plays an important role in the de novo pathway of purine nucleotide biosynthesis. Catalyzes the first committed step in the biosynthesis of AMP from IMP.</text>
</comment>
<comment type="catalytic activity">
    <reaction evidence="1">
        <text>IMP + L-aspartate + GTP = N(6)-(1,2-dicarboxyethyl)-AMP + GDP + phosphate + 2 H(+)</text>
        <dbReference type="Rhea" id="RHEA:15753"/>
        <dbReference type="ChEBI" id="CHEBI:15378"/>
        <dbReference type="ChEBI" id="CHEBI:29991"/>
        <dbReference type="ChEBI" id="CHEBI:37565"/>
        <dbReference type="ChEBI" id="CHEBI:43474"/>
        <dbReference type="ChEBI" id="CHEBI:57567"/>
        <dbReference type="ChEBI" id="CHEBI:58053"/>
        <dbReference type="ChEBI" id="CHEBI:58189"/>
        <dbReference type="EC" id="6.3.4.4"/>
    </reaction>
</comment>
<comment type="cofactor">
    <cofactor evidence="1">
        <name>Mg(2+)</name>
        <dbReference type="ChEBI" id="CHEBI:18420"/>
    </cofactor>
    <text evidence="1">Binds 1 Mg(2+) ion per subunit.</text>
</comment>
<comment type="pathway">
    <text evidence="1">Purine metabolism; AMP biosynthesis via de novo pathway; AMP from IMP: step 1/2.</text>
</comment>
<comment type="subunit">
    <text evidence="1">Homodimer.</text>
</comment>
<comment type="subcellular location">
    <subcellularLocation>
        <location evidence="1">Cytoplasm</location>
    </subcellularLocation>
</comment>
<comment type="similarity">
    <text evidence="1">Belongs to the adenylosuccinate synthetase family.</text>
</comment>
<keyword id="KW-0963">Cytoplasm</keyword>
<keyword id="KW-0342">GTP-binding</keyword>
<keyword id="KW-0436">Ligase</keyword>
<keyword id="KW-0460">Magnesium</keyword>
<keyword id="KW-0479">Metal-binding</keyword>
<keyword id="KW-0547">Nucleotide-binding</keyword>
<keyword id="KW-0658">Purine biosynthesis</keyword>
<keyword id="KW-1185">Reference proteome</keyword>
<protein>
    <recommendedName>
        <fullName evidence="1">Adenylosuccinate synthetase</fullName>
        <shortName evidence="1">AMPSase</shortName>
        <shortName evidence="1">AdSS</shortName>
        <ecNumber evidence="1">6.3.4.4</ecNumber>
    </recommendedName>
    <alternativeName>
        <fullName evidence="1">IMP--aspartate ligase</fullName>
    </alternativeName>
</protein>
<sequence length="429" mass="46409">MANVTVVGAQWGDEGKGKLVDWLSHRADVVARFQGGHNAGHTLVVGENVYKLSLLPSGVVRGKLSVIGNGVVVDPWAFVAEVDRIAQQGVVITPDVVKISETATLILPIHRELDALRENRDDGEPIGTTRRGIGPAYEDKVGRRAVRVIDLADPAALKARVKDILHHHNALRRGLGHEEYSADQLVAELTEIAPKILPYAAPVWRVLKDAIKSDQKVLFEGAQGALLDVDHGTYPFVTSSNTVSGQASAGTGVGPRDVGYVLGIAKAYMTRVGEGPFPTELHDADGQMLGERGHEFGVVTGRKRRCGWFDAVITRQTLQVGGVHGVALTKLDVLDGFKTIKVCVAYEVDGERLDHLPAGKEAQAKATPVYEELQGWEGSTAGARSWADLPAEAVKYVRRIEELIECPIALVSTSPEREDVILMQDPFRS</sequence>
<reference key="1">
    <citation type="submission" date="2006-08" db="EMBL/GenBank/DDBJ databases">
        <title>Complete sequence of Maricaulis maris MCS10.</title>
        <authorList>
            <consortium name="US DOE Joint Genome Institute"/>
            <person name="Copeland A."/>
            <person name="Lucas S."/>
            <person name="Lapidus A."/>
            <person name="Barry K."/>
            <person name="Detter J.C."/>
            <person name="Glavina del Rio T."/>
            <person name="Hammon N."/>
            <person name="Israni S."/>
            <person name="Dalin E."/>
            <person name="Tice H."/>
            <person name="Pitluck S."/>
            <person name="Saunders E."/>
            <person name="Brettin T."/>
            <person name="Bruce D."/>
            <person name="Han C."/>
            <person name="Tapia R."/>
            <person name="Gilna P."/>
            <person name="Schmutz J."/>
            <person name="Larimer F."/>
            <person name="Land M."/>
            <person name="Hauser L."/>
            <person name="Kyrpides N."/>
            <person name="Mikhailova N."/>
            <person name="Viollier P."/>
            <person name="Stephens C."/>
            <person name="Richardson P."/>
        </authorList>
    </citation>
    <scope>NUCLEOTIDE SEQUENCE [LARGE SCALE GENOMIC DNA]</scope>
    <source>
        <strain>MCS10</strain>
    </source>
</reference>
<name>PURA_MARMM</name>
<accession>Q0AS86</accession>
<proteinExistence type="inferred from homology"/>
<organism>
    <name type="scientific">Maricaulis maris (strain MCS10)</name>
    <name type="common">Caulobacter maris</name>
    <dbReference type="NCBI Taxonomy" id="394221"/>
    <lineage>
        <taxon>Bacteria</taxon>
        <taxon>Pseudomonadati</taxon>
        <taxon>Pseudomonadota</taxon>
        <taxon>Alphaproteobacteria</taxon>
        <taxon>Maricaulales</taxon>
        <taxon>Maricaulaceae</taxon>
        <taxon>Maricaulis</taxon>
    </lineage>
</organism>
<feature type="chain" id="PRO_1000000854" description="Adenylosuccinate synthetase">
    <location>
        <begin position="1"/>
        <end position="429"/>
    </location>
</feature>
<feature type="active site" description="Proton acceptor" evidence="1">
    <location>
        <position position="13"/>
    </location>
</feature>
<feature type="active site" description="Proton donor" evidence="1">
    <location>
        <position position="41"/>
    </location>
</feature>
<feature type="binding site" evidence="1">
    <location>
        <begin position="12"/>
        <end position="18"/>
    </location>
    <ligand>
        <name>GTP</name>
        <dbReference type="ChEBI" id="CHEBI:37565"/>
    </ligand>
</feature>
<feature type="binding site" description="in other chain" evidence="1">
    <location>
        <begin position="13"/>
        <end position="16"/>
    </location>
    <ligand>
        <name>IMP</name>
        <dbReference type="ChEBI" id="CHEBI:58053"/>
        <note>ligand shared between dimeric partners</note>
    </ligand>
</feature>
<feature type="binding site" evidence="1">
    <location>
        <position position="13"/>
    </location>
    <ligand>
        <name>Mg(2+)</name>
        <dbReference type="ChEBI" id="CHEBI:18420"/>
    </ligand>
</feature>
<feature type="binding site" description="in other chain" evidence="1">
    <location>
        <begin position="38"/>
        <end position="41"/>
    </location>
    <ligand>
        <name>IMP</name>
        <dbReference type="ChEBI" id="CHEBI:58053"/>
        <note>ligand shared between dimeric partners</note>
    </ligand>
</feature>
<feature type="binding site" evidence="1">
    <location>
        <begin position="40"/>
        <end position="42"/>
    </location>
    <ligand>
        <name>GTP</name>
        <dbReference type="ChEBI" id="CHEBI:37565"/>
    </ligand>
</feature>
<feature type="binding site" evidence="1">
    <location>
        <position position="40"/>
    </location>
    <ligand>
        <name>Mg(2+)</name>
        <dbReference type="ChEBI" id="CHEBI:18420"/>
    </ligand>
</feature>
<feature type="binding site" description="in other chain" evidence="1">
    <location>
        <position position="129"/>
    </location>
    <ligand>
        <name>IMP</name>
        <dbReference type="ChEBI" id="CHEBI:58053"/>
        <note>ligand shared between dimeric partners</note>
    </ligand>
</feature>
<feature type="binding site" evidence="1">
    <location>
        <position position="143"/>
    </location>
    <ligand>
        <name>IMP</name>
        <dbReference type="ChEBI" id="CHEBI:58053"/>
        <note>ligand shared between dimeric partners</note>
    </ligand>
</feature>
<feature type="binding site" description="in other chain" evidence="1">
    <location>
        <position position="223"/>
    </location>
    <ligand>
        <name>IMP</name>
        <dbReference type="ChEBI" id="CHEBI:58053"/>
        <note>ligand shared between dimeric partners</note>
    </ligand>
</feature>
<feature type="binding site" description="in other chain" evidence="1">
    <location>
        <position position="238"/>
    </location>
    <ligand>
        <name>IMP</name>
        <dbReference type="ChEBI" id="CHEBI:58053"/>
        <note>ligand shared between dimeric partners</note>
    </ligand>
</feature>
<feature type="binding site" evidence="1">
    <location>
        <begin position="298"/>
        <end position="304"/>
    </location>
    <ligand>
        <name>substrate</name>
    </ligand>
</feature>
<feature type="binding site" description="in other chain" evidence="1">
    <location>
        <position position="302"/>
    </location>
    <ligand>
        <name>IMP</name>
        <dbReference type="ChEBI" id="CHEBI:58053"/>
        <note>ligand shared between dimeric partners</note>
    </ligand>
</feature>
<feature type="binding site" evidence="1">
    <location>
        <position position="304"/>
    </location>
    <ligand>
        <name>GTP</name>
        <dbReference type="ChEBI" id="CHEBI:37565"/>
    </ligand>
</feature>
<feature type="binding site" evidence="1">
    <location>
        <begin position="330"/>
        <end position="332"/>
    </location>
    <ligand>
        <name>GTP</name>
        <dbReference type="ChEBI" id="CHEBI:37565"/>
    </ligand>
</feature>
<feature type="binding site" evidence="1">
    <location>
        <begin position="412"/>
        <end position="414"/>
    </location>
    <ligand>
        <name>GTP</name>
        <dbReference type="ChEBI" id="CHEBI:37565"/>
    </ligand>
</feature>